<protein>
    <recommendedName>
        <fullName>Cyclin-dependent kinase 8</fullName>
        <ecNumber>2.7.11.22</ecNumber>
        <ecNumber>2.7.11.23</ecNumber>
    </recommendedName>
    <alternativeName>
        <fullName>Cell division protein kinase 8</fullName>
    </alternativeName>
    <alternativeName>
        <fullName>Mediator complex subunit cdk8</fullName>
    </alternativeName>
    <alternativeName>
        <fullName>Mediator of RNA polymerase II transcription subunit cdk8</fullName>
    </alternativeName>
</protein>
<organism>
    <name type="scientific">Danio rerio</name>
    <name type="common">Zebrafish</name>
    <name type="synonym">Brachydanio rerio</name>
    <dbReference type="NCBI Taxonomy" id="7955"/>
    <lineage>
        <taxon>Eukaryota</taxon>
        <taxon>Metazoa</taxon>
        <taxon>Chordata</taxon>
        <taxon>Craniata</taxon>
        <taxon>Vertebrata</taxon>
        <taxon>Euteleostomi</taxon>
        <taxon>Actinopterygii</taxon>
        <taxon>Neopterygii</taxon>
        <taxon>Teleostei</taxon>
        <taxon>Ostariophysi</taxon>
        <taxon>Cypriniformes</taxon>
        <taxon>Danionidae</taxon>
        <taxon>Danioninae</taxon>
        <taxon>Danio</taxon>
    </lineage>
</organism>
<proteinExistence type="evidence at transcript level"/>
<reference key="1">
    <citation type="journal article" date="2002" name="Biochim. Biophys. Acta">
        <title>Cyclin-dependent kinase 8 is expressed both maternally and zygotically during zebrafish embryo development.</title>
        <authorList>
            <person name="Brabazon E.D."/>
            <person name="Bree R.T."/>
            <person name="Carton M.W."/>
            <person name="Grealy M."/>
            <person name="Byrnes L."/>
        </authorList>
    </citation>
    <scope>NUCLEOTIDE SEQUENCE [MRNA]</scope>
    <scope>DEVELOPMENTAL STAGE</scope>
</reference>
<accession>Q8JH47</accession>
<name>CDK8_DANRE</name>
<feature type="chain" id="PRO_0000312926" description="Cyclin-dependent kinase 8">
    <location>
        <begin position="1"/>
        <end position="464"/>
    </location>
</feature>
<feature type="domain" description="Protein kinase" evidence="3">
    <location>
        <begin position="21"/>
        <end position="335"/>
    </location>
</feature>
<feature type="region of interest" description="Interaction with CCNC" evidence="1">
    <location>
        <begin position="1"/>
        <end position="15"/>
    </location>
</feature>
<feature type="region of interest" description="Disordered" evidence="5">
    <location>
        <begin position="360"/>
        <end position="464"/>
    </location>
</feature>
<feature type="compositionally biased region" description="Low complexity" evidence="5">
    <location>
        <begin position="373"/>
        <end position="390"/>
    </location>
</feature>
<feature type="compositionally biased region" description="Polar residues" evidence="5">
    <location>
        <begin position="410"/>
        <end position="426"/>
    </location>
</feature>
<feature type="compositionally biased region" description="Polar residues" evidence="5">
    <location>
        <begin position="434"/>
        <end position="446"/>
    </location>
</feature>
<feature type="compositionally biased region" description="Low complexity" evidence="5">
    <location>
        <begin position="447"/>
        <end position="464"/>
    </location>
</feature>
<feature type="active site" description="Proton acceptor" evidence="3 4">
    <location>
        <position position="151"/>
    </location>
</feature>
<feature type="binding site" evidence="3">
    <location>
        <begin position="27"/>
        <end position="35"/>
    </location>
    <ligand>
        <name>ATP</name>
        <dbReference type="ChEBI" id="CHEBI:30616"/>
    </ligand>
</feature>
<feature type="binding site" evidence="3">
    <location>
        <position position="52"/>
    </location>
    <ligand>
        <name>ATP</name>
        <dbReference type="ChEBI" id="CHEBI:30616"/>
    </ligand>
</feature>
<evidence type="ECO:0000250" key="1"/>
<evidence type="ECO:0000250" key="2">
    <source>
        <dbReference type="UniProtKB" id="P49336"/>
    </source>
</evidence>
<evidence type="ECO:0000255" key="3">
    <source>
        <dbReference type="PROSITE-ProRule" id="PRU00159"/>
    </source>
</evidence>
<evidence type="ECO:0000255" key="4">
    <source>
        <dbReference type="PROSITE-ProRule" id="PRU10027"/>
    </source>
</evidence>
<evidence type="ECO:0000256" key="5">
    <source>
        <dbReference type="SAM" id="MobiDB-lite"/>
    </source>
</evidence>
<evidence type="ECO:0000269" key="6">
    <source>
    </source>
</evidence>
<evidence type="ECO:0000305" key="7"/>
<comment type="function">
    <text evidence="2">Component of the Mediator complex, a coactivator involved in regulated gene transcription of nearly all RNA polymerase II-dependent genes. Mediator functions as a bridge to convey information from gene-specific regulatory proteins to the basal RNA polymerase II transcription machinery. Mediator is recruited to promoters by direct interactions with regulatory proteins and serves as a scaffold for the assembly of a functional pre-initiation complex with RNA polymerase II and the general transcription factors. Phosphorylates the CTD (C-terminal domain) of the large subunit of RNA polymerase II (RNAp II), which may inhibit the formation of a transcription initiation complex (By similarity).</text>
</comment>
<comment type="catalytic activity">
    <reaction>
        <text>L-seryl-[protein] + ATP = O-phospho-L-seryl-[protein] + ADP + H(+)</text>
        <dbReference type="Rhea" id="RHEA:17989"/>
        <dbReference type="Rhea" id="RHEA-COMP:9863"/>
        <dbReference type="Rhea" id="RHEA-COMP:11604"/>
        <dbReference type="ChEBI" id="CHEBI:15378"/>
        <dbReference type="ChEBI" id="CHEBI:29999"/>
        <dbReference type="ChEBI" id="CHEBI:30616"/>
        <dbReference type="ChEBI" id="CHEBI:83421"/>
        <dbReference type="ChEBI" id="CHEBI:456216"/>
        <dbReference type="EC" id="2.7.11.22"/>
    </reaction>
</comment>
<comment type="catalytic activity">
    <reaction>
        <text>L-threonyl-[protein] + ATP = O-phospho-L-threonyl-[protein] + ADP + H(+)</text>
        <dbReference type="Rhea" id="RHEA:46608"/>
        <dbReference type="Rhea" id="RHEA-COMP:11060"/>
        <dbReference type="Rhea" id="RHEA-COMP:11605"/>
        <dbReference type="ChEBI" id="CHEBI:15378"/>
        <dbReference type="ChEBI" id="CHEBI:30013"/>
        <dbReference type="ChEBI" id="CHEBI:30616"/>
        <dbReference type="ChEBI" id="CHEBI:61977"/>
        <dbReference type="ChEBI" id="CHEBI:456216"/>
        <dbReference type="EC" id="2.7.11.22"/>
    </reaction>
</comment>
<comment type="catalytic activity">
    <reaction>
        <text>[DNA-directed RNA polymerase] + ATP = phospho-[DNA-directed RNA polymerase] + ADP + H(+)</text>
        <dbReference type="Rhea" id="RHEA:10216"/>
        <dbReference type="Rhea" id="RHEA-COMP:11321"/>
        <dbReference type="Rhea" id="RHEA-COMP:11322"/>
        <dbReference type="ChEBI" id="CHEBI:15378"/>
        <dbReference type="ChEBI" id="CHEBI:30616"/>
        <dbReference type="ChEBI" id="CHEBI:43176"/>
        <dbReference type="ChEBI" id="CHEBI:68546"/>
        <dbReference type="ChEBI" id="CHEBI:456216"/>
        <dbReference type="EC" id="2.7.11.23"/>
    </reaction>
</comment>
<comment type="cofactor">
    <cofactor evidence="1">
        <name>Mg(2+)</name>
        <dbReference type="ChEBI" id="CHEBI:18420"/>
    </cofactor>
</comment>
<comment type="subunit">
    <text evidence="1">Component of the Mediator complex. Interacts with ccnc.</text>
</comment>
<comment type="subcellular location">
    <subcellularLocation>
        <location evidence="7">Nucleus</location>
    </subcellularLocation>
</comment>
<comment type="developmental stage">
    <text evidence="6">Expressed maternally. Expressed zygotically throughout development from the mid-blastula transition. Expression is concentrated in the head and trunk region of the embryo at the pharyngula stage of development.</text>
</comment>
<comment type="similarity">
    <text evidence="7">Belongs to the protein kinase superfamily. CMGC Ser/Thr protein kinase family. CDC2/CDKX subfamily.</text>
</comment>
<gene>
    <name type="primary">cdk8</name>
</gene>
<sequence>MGYDFKVKLTGERERVEDLFEYEGCKVGRGTYGHVYKAKRKDGKDDRDYALKQIEGTGISMSACREIALLRELKHPNVISLQKVFLSHADRKVWLLFDYAEHDLWHIIKFHRASKANKKPLQLPRGMVKSLLYQILDGIHYLHANWVLHRDLKPANILVMGEGPERGRVKIADMGFARLSNSPLKPLADLDPVVVTFWYRAPELLLGARHYTKAIDIWAIGCIFAELLTSEPIFHCRQEDIKTSNPYHHDQLDRIFNVMGFPADKDWEDIKKMPEHSTLMKDFRRNTYTNCSLIKYMEKHKVKPDSKAFHLLQKLLTMDPIRRITSEQAMQDPYFLEEPLPTSDVFAGCQIPYPKREFLTEEEPEDKADKKNQQQQQGNNHTNGAGHTGNPDNSHAQGPPLKKVRVVPPTATSSGLIMTSDYQRSNPHAAYQNPGPSTSLPQSSMGYSSTSQQPPQYSHQTHRY</sequence>
<keyword id="KW-0010">Activator</keyword>
<keyword id="KW-0067">ATP-binding</keyword>
<keyword id="KW-0418">Kinase</keyword>
<keyword id="KW-0547">Nucleotide-binding</keyword>
<keyword id="KW-0539">Nucleus</keyword>
<keyword id="KW-1185">Reference proteome</keyword>
<keyword id="KW-0678">Repressor</keyword>
<keyword id="KW-0723">Serine/threonine-protein kinase</keyword>
<keyword id="KW-0804">Transcription</keyword>
<keyword id="KW-0805">Transcription regulation</keyword>
<keyword id="KW-0808">Transferase</keyword>
<dbReference type="EC" id="2.7.11.22"/>
<dbReference type="EC" id="2.7.11.23"/>
<dbReference type="EMBL" id="AY007219">
    <property type="protein sequence ID" value="AAG01892.1"/>
    <property type="molecule type" value="mRNA"/>
</dbReference>
<dbReference type="SMR" id="Q8JH47"/>
<dbReference type="FunCoup" id="Q8JH47">
    <property type="interactions" value="2285"/>
</dbReference>
<dbReference type="STRING" id="7955.ENSDARP00000022588"/>
<dbReference type="PaxDb" id="7955-ENSDARP00000022588"/>
<dbReference type="AGR" id="ZFIN:ZDB-GENE-030903-2"/>
<dbReference type="ZFIN" id="ZDB-GENE-030903-2">
    <property type="gene designation" value="cdk8"/>
</dbReference>
<dbReference type="eggNOG" id="KOG0666">
    <property type="taxonomic scope" value="Eukaryota"/>
</dbReference>
<dbReference type="InParanoid" id="Q8JH47"/>
<dbReference type="PRO" id="PR:Q8JH47"/>
<dbReference type="Proteomes" id="UP000000437">
    <property type="component" value="Unplaced"/>
</dbReference>
<dbReference type="GO" id="GO:0005634">
    <property type="term" value="C:nucleus"/>
    <property type="evidence" value="ECO:0000318"/>
    <property type="project" value="GO_Central"/>
</dbReference>
<dbReference type="GO" id="GO:0005524">
    <property type="term" value="F:ATP binding"/>
    <property type="evidence" value="ECO:0007669"/>
    <property type="project" value="UniProtKB-KW"/>
</dbReference>
<dbReference type="GO" id="GO:0004693">
    <property type="term" value="F:cyclin-dependent protein serine/threonine kinase activity"/>
    <property type="evidence" value="ECO:0007669"/>
    <property type="project" value="UniProtKB-EC"/>
</dbReference>
<dbReference type="GO" id="GO:0004672">
    <property type="term" value="F:protein kinase activity"/>
    <property type="evidence" value="ECO:0000250"/>
    <property type="project" value="UniProtKB"/>
</dbReference>
<dbReference type="GO" id="GO:0106310">
    <property type="term" value="F:protein serine kinase activity"/>
    <property type="evidence" value="ECO:0007669"/>
    <property type="project" value="RHEA"/>
</dbReference>
<dbReference type="GO" id="GO:0004674">
    <property type="term" value="F:protein serine/threonine kinase activity"/>
    <property type="evidence" value="ECO:0000318"/>
    <property type="project" value="GO_Central"/>
</dbReference>
<dbReference type="GO" id="GO:0008353">
    <property type="term" value="F:RNA polymerase II CTD heptapeptide repeat kinase activity"/>
    <property type="evidence" value="ECO:0007669"/>
    <property type="project" value="UniProtKB-EC"/>
</dbReference>
<dbReference type="CDD" id="cd07868">
    <property type="entry name" value="STKc_CDK8"/>
    <property type="match status" value="1"/>
</dbReference>
<dbReference type="FunFam" id="1.10.510.10:FF:000088">
    <property type="entry name" value="cyclin-dependent kinase 8 isoform X1"/>
    <property type="match status" value="1"/>
</dbReference>
<dbReference type="FunFam" id="3.30.200.20:FF:000122">
    <property type="entry name" value="cyclin-dependent kinase 8 isoform X1"/>
    <property type="match status" value="1"/>
</dbReference>
<dbReference type="Gene3D" id="3.30.200.20">
    <property type="entry name" value="Phosphorylase Kinase, domain 1"/>
    <property type="match status" value="1"/>
</dbReference>
<dbReference type="Gene3D" id="1.10.510.10">
    <property type="entry name" value="Transferase(Phosphotransferase) domain 1"/>
    <property type="match status" value="1"/>
</dbReference>
<dbReference type="InterPro" id="IPR050108">
    <property type="entry name" value="CDK"/>
</dbReference>
<dbReference type="InterPro" id="IPR011009">
    <property type="entry name" value="Kinase-like_dom_sf"/>
</dbReference>
<dbReference type="InterPro" id="IPR000719">
    <property type="entry name" value="Prot_kinase_dom"/>
</dbReference>
<dbReference type="InterPro" id="IPR017441">
    <property type="entry name" value="Protein_kinase_ATP_BS"/>
</dbReference>
<dbReference type="InterPro" id="IPR008271">
    <property type="entry name" value="Ser/Thr_kinase_AS"/>
</dbReference>
<dbReference type="PANTHER" id="PTHR24056">
    <property type="entry name" value="CELL DIVISION PROTEIN KINASE"/>
    <property type="match status" value="1"/>
</dbReference>
<dbReference type="PANTHER" id="PTHR24056:SF243">
    <property type="entry name" value="CYCLIN-DEPENDENT KINASE 8"/>
    <property type="match status" value="1"/>
</dbReference>
<dbReference type="Pfam" id="PF00069">
    <property type="entry name" value="Pkinase"/>
    <property type="match status" value="1"/>
</dbReference>
<dbReference type="SMART" id="SM00220">
    <property type="entry name" value="S_TKc"/>
    <property type="match status" value="1"/>
</dbReference>
<dbReference type="SUPFAM" id="SSF56112">
    <property type="entry name" value="Protein kinase-like (PK-like)"/>
    <property type="match status" value="1"/>
</dbReference>
<dbReference type="PROSITE" id="PS00107">
    <property type="entry name" value="PROTEIN_KINASE_ATP"/>
    <property type="match status" value="1"/>
</dbReference>
<dbReference type="PROSITE" id="PS50011">
    <property type="entry name" value="PROTEIN_KINASE_DOM"/>
    <property type="match status" value="1"/>
</dbReference>
<dbReference type="PROSITE" id="PS00108">
    <property type="entry name" value="PROTEIN_KINASE_ST"/>
    <property type="match status" value="1"/>
</dbReference>